<reference key="1">
    <citation type="journal article" date="2008" name="PLoS Genet.">
        <title>Genomic islands in the pathogenic filamentous fungus Aspergillus fumigatus.</title>
        <authorList>
            <person name="Fedorova N.D."/>
            <person name="Khaldi N."/>
            <person name="Joardar V.S."/>
            <person name="Maiti R."/>
            <person name="Amedeo P."/>
            <person name="Anderson M.J."/>
            <person name="Crabtree J."/>
            <person name="Silva J.C."/>
            <person name="Badger J.H."/>
            <person name="Albarraq A."/>
            <person name="Angiuoli S."/>
            <person name="Bussey H."/>
            <person name="Bowyer P."/>
            <person name="Cotty P.J."/>
            <person name="Dyer P.S."/>
            <person name="Egan A."/>
            <person name="Galens K."/>
            <person name="Fraser-Liggett C.M."/>
            <person name="Haas B.J."/>
            <person name="Inman J.M."/>
            <person name="Kent R."/>
            <person name="Lemieux S."/>
            <person name="Malavazi I."/>
            <person name="Orvis J."/>
            <person name="Roemer T."/>
            <person name="Ronning C.M."/>
            <person name="Sundaram J.P."/>
            <person name="Sutton G."/>
            <person name="Turner G."/>
            <person name="Venter J.C."/>
            <person name="White O.R."/>
            <person name="Whitty B.R."/>
            <person name="Youngman P."/>
            <person name="Wolfe K.H."/>
            <person name="Goldman G.H."/>
            <person name="Wortman J.R."/>
            <person name="Jiang B."/>
            <person name="Denning D.W."/>
            <person name="Nierman W.C."/>
        </authorList>
    </citation>
    <scope>NUCLEOTIDE SEQUENCE [LARGE SCALE GENOMIC DNA]</scope>
    <source>
        <strain>ATCC 1020 / DSM 3700 / CBS 544.65 / FGSC A1164 / JCM 1740 / NRRL 181 / WB 181</strain>
    </source>
</reference>
<proteinExistence type="inferred from homology"/>
<feature type="chain" id="PRO_0000369594" description="Ribosome biogenesis protein ytm1">
    <location>
        <begin position="1"/>
        <end position="488"/>
    </location>
</feature>
<feature type="repeat" description="WD 1">
    <location>
        <begin position="128"/>
        <end position="167"/>
    </location>
</feature>
<feature type="repeat" description="WD 2">
    <location>
        <begin position="174"/>
        <end position="212"/>
    </location>
</feature>
<feature type="repeat" description="WD 3">
    <location>
        <begin position="223"/>
        <end position="262"/>
    </location>
</feature>
<feature type="repeat" description="WD 4">
    <location>
        <begin position="297"/>
        <end position="337"/>
    </location>
</feature>
<feature type="repeat" description="WD 5">
    <location>
        <begin position="339"/>
        <end position="378"/>
    </location>
</feature>
<feature type="repeat" description="WD 6">
    <location>
        <begin position="384"/>
        <end position="424"/>
    </location>
</feature>
<feature type="repeat" description="WD 7">
    <location>
        <begin position="452"/>
        <end position="488"/>
    </location>
</feature>
<feature type="region of interest" description="Ubiquitin-like (UBL) domain" evidence="1">
    <location>
        <begin position="20"/>
        <end position="101"/>
    </location>
</feature>
<feature type="region of interest" description="Disordered" evidence="2">
    <location>
        <begin position="256"/>
        <end position="285"/>
    </location>
</feature>
<name>YTM1_NEOFI</name>
<dbReference type="EMBL" id="DS027685">
    <property type="protein sequence ID" value="EAW25362.1"/>
    <property type="molecule type" value="Genomic_DNA"/>
</dbReference>
<dbReference type="RefSeq" id="XP_001267259.1">
    <property type="nucleotide sequence ID" value="XM_001267258.1"/>
</dbReference>
<dbReference type="SMR" id="A1CXL0"/>
<dbReference type="STRING" id="331117.A1CXL0"/>
<dbReference type="EnsemblFungi" id="EAW25362">
    <property type="protein sequence ID" value="EAW25362"/>
    <property type="gene ID" value="NFIA_108560"/>
</dbReference>
<dbReference type="GeneID" id="4593839"/>
<dbReference type="KEGG" id="nfi:NFIA_108560"/>
<dbReference type="VEuPathDB" id="FungiDB:NFIA_108560"/>
<dbReference type="eggNOG" id="KOG0313">
    <property type="taxonomic scope" value="Eukaryota"/>
</dbReference>
<dbReference type="HOGENOM" id="CLU_000288_57_0_1"/>
<dbReference type="OMA" id="DHKYVEF"/>
<dbReference type="OrthoDB" id="10251381at2759"/>
<dbReference type="Proteomes" id="UP000006702">
    <property type="component" value="Unassembled WGS sequence"/>
</dbReference>
<dbReference type="GO" id="GO:0005654">
    <property type="term" value="C:nucleoplasm"/>
    <property type="evidence" value="ECO:0007669"/>
    <property type="project" value="UniProtKB-SubCell"/>
</dbReference>
<dbReference type="GO" id="GO:0070545">
    <property type="term" value="C:PeBoW complex"/>
    <property type="evidence" value="ECO:0007669"/>
    <property type="project" value="EnsemblFungi"/>
</dbReference>
<dbReference type="GO" id="GO:0030687">
    <property type="term" value="C:preribosome, large subunit precursor"/>
    <property type="evidence" value="ECO:0007669"/>
    <property type="project" value="UniProtKB-UniRule"/>
</dbReference>
<dbReference type="GO" id="GO:0043021">
    <property type="term" value="F:ribonucleoprotein complex binding"/>
    <property type="evidence" value="ECO:0007669"/>
    <property type="project" value="UniProtKB-UniRule"/>
</dbReference>
<dbReference type="GO" id="GO:0051276">
    <property type="term" value="P:chromosome organization"/>
    <property type="evidence" value="ECO:0007669"/>
    <property type="project" value="EnsemblFungi"/>
</dbReference>
<dbReference type="GO" id="GO:0000466">
    <property type="term" value="P:maturation of 5.8S rRNA from tricistronic rRNA transcript (SSU-rRNA, 5.8S rRNA, LSU-rRNA)"/>
    <property type="evidence" value="ECO:0007669"/>
    <property type="project" value="UniProtKB-UniRule"/>
</dbReference>
<dbReference type="GO" id="GO:0000463">
    <property type="term" value="P:maturation of LSU-rRNA from tricistronic rRNA transcript (SSU-rRNA, 5.8S rRNA, LSU-rRNA)"/>
    <property type="evidence" value="ECO:0007669"/>
    <property type="project" value="UniProtKB-UniRule"/>
</dbReference>
<dbReference type="GO" id="GO:0110136">
    <property type="term" value="P:protein-RNA complex remodeling"/>
    <property type="evidence" value="ECO:0007669"/>
    <property type="project" value="EnsemblFungi"/>
</dbReference>
<dbReference type="CDD" id="cd00200">
    <property type="entry name" value="WD40"/>
    <property type="match status" value="1"/>
</dbReference>
<dbReference type="FunFam" id="2.130.10.10:FF:000593">
    <property type="entry name" value="Ribosome biogenesis protein ytm1"/>
    <property type="match status" value="1"/>
</dbReference>
<dbReference type="Gene3D" id="2.130.10.10">
    <property type="entry name" value="YVTN repeat-like/Quinoprotein amine dehydrogenase"/>
    <property type="match status" value="1"/>
</dbReference>
<dbReference type="HAMAP" id="MF_03029">
    <property type="entry name" value="WDR12"/>
    <property type="match status" value="1"/>
</dbReference>
<dbReference type="InterPro" id="IPR020472">
    <property type="entry name" value="G-protein_beta_WD-40_rep"/>
</dbReference>
<dbReference type="InterPro" id="IPR012972">
    <property type="entry name" value="NLE"/>
</dbReference>
<dbReference type="InterPro" id="IPR015943">
    <property type="entry name" value="WD40/YVTN_repeat-like_dom_sf"/>
</dbReference>
<dbReference type="InterPro" id="IPR019775">
    <property type="entry name" value="WD40_repeat_CS"/>
</dbReference>
<dbReference type="InterPro" id="IPR036322">
    <property type="entry name" value="WD40_repeat_dom_sf"/>
</dbReference>
<dbReference type="InterPro" id="IPR001680">
    <property type="entry name" value="WD40_rpt"/>
</dbReference>
<dbReference type="InterPro" id="IPR028599">
    <property type="entry name" value="WDR12/Ytm1"/>
</dbReference>
<dbReference type="PANTHER" id="PTHR19855:SF11">
    <property type="entry name" value="RIBOSOME BIOGENESIS PROTEIN WDR12"/>
    <property type="match status" value="1"/>
</dbReference>
<dbReference type="PANTHER" id="PTHR19855">
    <property type="entry name" value="WD40 REPEAT PROTEIN 12, 37"/>
    <property type="match status" value="1"/>
</dbReference>
<dbReference type="Pfam" id="PF08154">
    <property type="entry name" value="NLE"/>
    <property type="match status" value="1"/>
</dbReference>
<dbReference type="Pfam" id="PF00400">
    <property type="entry name" value="WD40"/>
    <property type="match status" value="5"/>
</dbReference>
<dbReference type="PRINTS" id="PR00320">
    <property type="entry name" value="GPROTEINBRPT"/>
</dbReference>
<dbReference type="SMART" id="SM00320">
    <property type="entry name" value="WD40"/>
    <property type="match status" value="7"/>
</dbReference>
<dbReference type="SUPFAM" id="SSF50978">
    <property type="entry name" value="WD40 repeat-like"/>
    <property type="match status" value="1"/>
</dbReference>
<dbReference type="PROSITE" id="PS00678">
    <property type="entry name" value="WD_REPEATS_1"/>
    <property type="match status" value="2"/>
</dbReference>
<dbReference type="PROSITE" id="PS50082">
    <property type="entry name" value="WD_REPEATS_2"/>
    <property type="match status" value="5"/>
</dbReference>
<dbReference type="PROSITE" id="PS50294">
    <property type="entry name" value="WD_REPEATS_REGION"/>
    <property type="match status" value="1"/>
</dbReference>
<keyword id="KW-0539">Nucleus</keyword>
<keyword id="KW-1185">Reference proteome</keyword>
<keyword id="KW-0677">Repeat</keyword>
<keyword id="KW-0690">Ribosome biogenesis</keyword>
<keyword id="KW-0698">rRNA processing</keyword>
<keyword id="KW-0853">WD repeat</keyword>
<organism>
    <name type="scientific">Neosartorya fischeri (strain ATCC 1020 / DSM 3700 / CBS 544.65 / FGSC A1164 / JCM 1740 / NRRL 181 / WB 181)</name>
    <name type="common">Aspergillus fischerianus</name>
    <dbReference type="NCBI Taxonomy" id="331117"/>
    <lineage>
        <taxon>Eukaryota</taxon>
        <taxon>Fungi</taxon>
        <taxon>Dikarya</taxon>
        <taxon>Ascomycota</taxon>
        <taxon>Pezizomycotina</taxon>
        <taxon>Eurotiomycetes</taxon>
        <taxon>Eurotiomycetidae</taxon>
        <taxon>Eurotiales</taxon>
        <taxon>Aspergillaceae</taxon>
        <taxon>Aspergillus</taxon>
        <taxon>Aspergillus subgen. Fumigati</taxon>
    </lineage>
</organism>
<sequence>MNDGSDFDATATSSAAQRQVRVQLTSKQEDIALPDNAGPILVPTSLRRYALSTLVNNLLGNDKPIPFEFLINGTFLRTSIDEYLTANGISAETTLEIEYVRALIPPLHIASFQHDDWVSSTDVLSATSPAATWASATISQGQEKILSGSYDGLLRVWNMSSQIVATSPAAADGGHTASIKAAKFVTPNQIASAGLDRTVRLWKYSESDEGFSGTIAPQLELYGHKSGINSLAVHAPSNRILSASSDNSVGFWSTKKSDAPAAPEDLLPSAASRSSKRRKLNSSVTVPQRGPLALLSSHTAPVSAAIFDEKDSTVGYSASWDHSLRTWDLVTSTLVDTRTTSHSLLSLEHLPELSLLAAGTSARHITLIDPRASATTISAMTLRGHTNAVVSLARDPHSTYGLISGSHDGTCRIWDIRATKTDKDGVVGESVYSISRKSLEEQGKSDTKRVGGEGVKVFSVCWDKTVGIVSAGEDKRIQINRGEGVLSA</sequence>
<evidence type="ECO:0000255" key="1">
    <source>
        <dbReference type="HAMAP-Rule" id="MF_03029"/>
    </source>
</evidence>
<evidence type="ECO:0000256" key="2">
    <source>
        <dbReference type="SAM" id="MobiDB-lite"/>
    </source>
</evidence>
<gene>
    <name type="primary">ytm1</name>
    <name type="ORF">NFIA_108560</name>
</gene>
<comment type="function">
    <text evidence="1">Component of the NOP7 complex, which is required for maturation of the 25S and 5.8S ribosomal RNAs and formation of the 60S ribosome.</text>
</comment>
<comment type="subunit">
    <text evidence="1">Component of the NOP7 complex, composed of erb1, nop7 and ytm1. The complex is held together by erb1, which interacts with nop7 via its N-terminal domain and with ytm1 via a high-affinity interaction between the seven-bladed beta-propeller domains of the 2 proteins. The NOP7 complex associates with the 66S pre-ribosome. Interacts (via UBL domain) with mdn1 (via VWFA/MIDAS domain).</text>
</comment>
<comment type="subcellular location">
    <subcellularLocation>
        <location evidence="1">Nucleus</location>
        <location evidence="1">Nucleolus</location>
    </subcellularLocation>
    <subcellularLocation>
        <location evidence="1">Nucleus</location>
        <location evidence="1">Nucleoplasm</location>
    </subcellularLocation>
</comment>
<comment type="similarity">
    <text evidence="1">Belongs to the WD repeat WDR12/YTM1 family.</text>
</comment>
<protein>
    <recommendedName>
        <fullName evidence="1">Ribosome biogenesis protein ytm1</fullName>
    </recommendedName>
</protein>
<accession>A1CXL0</accession>